<keyword id="KW-0067">ATP-binding</keyword>
<keyword id="KW-0436">Ligase</keyword>
<keyword id="KW-0460">Magnesium</keyword>
<keyword id="KW-0479">Metal-binding</keyword>
<keyword id="KW-0520">NAD</keyword>
<keyword id="KW-0547">Nucleotide-binding</keyword>
<keyword id="KW-1185">Reference proteome</keyword>
<protein>
    <recommendedName>
        <fullName evidence="1">NH(3)-dependent NAD(+) synthetase</fullName>
        <ecNumber evidence="1">6.3.1.5</ecNumber>
    </recommendedName>
</protein>
<accession>A7IAS7</accession>
<feature type="chain" id="PRO_1000099033" description="NH(3)-dependent NAD(+) synthetase">
    <location>
        <begin position="1"/>
        <end position="248"/>
    </location>
</feature>
<feature type="binding site" evidence="1">
    <location>
        <begin position="31"/>
        <end position="38"/>
    </location>
    <ligand>
        <name>ATP</name>
        <dbReference type="ChEBI" id="CHEBI:30616"/>
    </ligand>
</feature>
<feature type="binding site" evidence="1">
    <location>
        <position position="37"/>
    </location>
    <ligand>
        <name>Mg(2+)</name>
        <dbReference type="ChEBI" id="CHEBI:18420"/>
    </ligand>
</feature>
<feature type="binding site" evidence="1">
    <location>
        <position position="114"/>
    </location>
    <ligand>
        <name>deamido-NAD(+)</name>
        <dbReference type="ChEBI" id="CHEBI:58437"/>
    </ligand>
</feature>
<feature type="binding site" evidence="1">
    <location>
        <position position="134"/>
    </location>
    <ligand>
        <name>ATP</name>
        <dbReference type="ChEBI" id="CHEBI:30616"/>
    </ligand>
</feature>
<feature type="binding site" evidence="1">
    <location>
        <position position="139"/>
    </location>
    <ligand>
        <name>Mg(2+)</name>
        <dbReference type="ChEBI" id="CHEBI:18420"/>
    </ligand>
</feature>
<feature type="binding site" evidence="1">
    <location>
        <position position="147"/>
    </location>
    <ligand>
        <name>deamido-NAD(+)</name>
        <dbReference type="ChEBI" id="CHEBI:58437"/>
    </ligand>
</feature>
<feature type="binding site" evidence="1">
    <location>
        <position position="154"/>
    </location>
    <ligand>
        <name>deamido-NAD(+)</name>
        <dbReference type="ChEBI" id="CHEBI:58437"/>
    </ligand>
</feature>
<feature type="binding site" evidence="1">
    <location>
        <position position="163"/>
    </location>
    <ligand>
        <name>ATP</name>
        <dbReference type="ChEBI" id="CHEBI:30616"/>
    </ligand>
</feature>
<feature type="binding site" evidence="1">
    <location>
        <position position="185"/>
    </location>
    <ligand>
        <name>ATP</name>
        <dbReference type="ChEBI" id="CHEBI:30616"/>
    </ligand>
</feature>
<feature type="binding site" evidence="1">
    <location>
        <begin position="236"/>
        <end position="237"/>
    </location>
    <ligand>
        <name>deamido-NAD(+)</name>
        <dbReference type="ChEBI" id="CHEBI:58437"/>
    </ligand>
</feature>
<gene>
    <name evidence="1" type="primary">nadE</name>
    <name type="ordered locus">Mboo_2324</name>
</gene>
<comment type="function">
    <text evidence="1">Catalyzes the ATP-dependent amidation of deamido-NAD to form NAD. Uses ammonia as a nitrogen source.</text>
</comment>
<comment type="catalytic activity">
    <reaction evidence="1">
        <text>deamido-NAD(+) + NH4(+) + ATP = AMP + diphosphate + NAD(+) + H(+)</text>
        <dbReference type="Rhea" id="RHEA:21188"/>
        <dbReference type="ChEBI" id="CHEBI:15378"/>
        <dbReference type="ChEBI" id="CHEBI:28938"/>
        <dbReference type="ChEBI" id="CHEBI:30616"/>
        <dbReference type="ChEBI" id="CHEBI:33019"/>
        <dbReference type="ChEBI" id="CHEBI:57540"/>
        <dbReference type="ChEBI" id="CHEBI:58437"/>
        <dbReference type="ChEBI" id="CHEBI:456215"/>
        <dbReference type="EC" id="6.3.1.5"/>
    </reaction>
</comment>
<comment type="pathway">
    <text evidence="1">Cofactor biosynthesis; NAD(+) biosynthesis; NAD(+) from deamido-NAD(+) (ammonia route): step 1/1.</text>
</comment>
<comment type="subunit">
    <text evidence="1">Homodimer.</text>
</comment>
<comment type="similarity">
    <text evidence="1">Belongs to the NAD synthetase family.</text>
</comment>
<organism>
    <name type="scientific">Methanoregula boonei (strain DSM 21154 / JCM 14090 / 6A8)</name>
    <dbReference type="NCBI Taxonomy" id="456442"/>
    <lineage>
        <taxon>Archaea</taxon>
        <taxon>Methanobacteriati</taxon>
        <taxon>Methanobacteriota</taxon>
        <taxon>Stenosarchaea group</taxon>
        <taxon>Methanomicrobia</taxon>
        <taxon>Methanomicrobiales</taxon>
        <taxon>Methanoregulaceae</taxon>
        <taxon>Methanoregula</taxon>
    </lineage>
</organism>
<evidence type="ECO:0000255" key="1">
    <source>
        <dbReference type="HAMAP-Rule" id="MF_00193"/>
    </source>
</evidence>
<reference key="1">
    <citation type="journal article" date="2015" name="Microbiology">
        <title>Genome of Methanoregula boonei 6A8 reveals adaptations to oligotrophic peatland environments.</title>
        <authorList>
            <person name="Braeuer S."/>
            <person name="Cadillo-Quiroz H."/>
            <person name="Kyrpides N."/>
            <person name="Woyke T."/>
            <person name="Goodwin L."/>
            <person name="Detter C."/>
            <person name="Podell S."/>
            <person name="Yavitt J.B."/>
            <person name="Zinder S.H."/>
        </authorList>
    </citation>
    <scope>NUCLEOTIDE SEQUENCE [LARGE SCALE GENOMIC DNA]</scope>
    <source>
        <strain>DSM 21154 / JCM 14090 / 6A8</strain>
    </source>
</reference>
<name>NADE_METB6</name>
<proteinExistence type="inferred from homology"/>
<sequence length="248" mass="26893">MAQELGCRMGQVEQMIRYAYWNSKSQGIVVGVSGGVDSALAAAFCCRAIGPEKVLGLSLPASVSNPQDLSDAQELCAMLGMEHRVVLIDPMLAAFKTIPGFVETPYLLGNLMARIRMTVLYYHANRDHRLVCGTSNRSEAMLGYCTKYGDNAADFQPIVHLYKTDVYEMAKEVKIPKAILEKTPSAGLWAGQSDEGEIGLSYAEIDAALKNLEANGWKAGTPSEEKVLSRAQANAHKRLAAPNLLSVP</sequence>
<dbReference type="EC" id="6.3.1.5" evidence="1"/>
<dbReference type="EMBL" id="CP000780">
    <property type="protein sequence ID" value="ABS56838.1"/>
    <property type="molecule type" value="Genomic_DNA"/>
</dbReference>
<dbReference type="RefSeq" id="WP_012107899.1">
    <property type="nucleotide sequence ID" value="NC_009712.1"/>
</dbReference>
<dbReference type="SMR" id="A7IAS7"/>
<dbReference type="STRING" id="456442.Mboo_2324"/>
<dbReference type="GeneID" id="5410519"/>
<dbReference type="KEGG" id="mbn:Mboo_2324"/>
<dbReference type="eggNOG" id="arCOG00069">
    <property type="taxonomic scope" value="Archaea"/>
</dbReference>
<dbReference type="HOGENOM" id="CLU_059327_1_1_2"/>
<dbReference type="OrthoDB" id="39312at2157"/>
<dbReference type="UniPathway" id="UPA00253">
    <property type="reaction ID" value="UER00333"/>
</dbReference>
<dbReference type="Proteomes" id="UP000002408">
    <property type="component" value="Chromosome"/>
</dbReference>
<dbReference type="GO" id="GO:0005737">
    <property type="term" value="C:cytoplasm"/>
    <property type="evidence" value="ECO:0007669"/>
    <property type="project" value="InterPro"/>
</dbReference>
<dbReference type="GO" id="GO:0005524">
    <property type="term" value="F:ATP binding"/>
    <property type="evidence" value="ECO:0007669"/>
    <property type="project" value="UniProtKB-UniRule"/>
</dbReference>
<dbReference type="GO" id="GO:0004359">
    <property type="term" value="F:glutaminase activity"/>
    <property type="evidence" value="ECO:0007669"/>
    <property type="project" value="InterPro"/>
</dbReference>
<dbReference type="GO" id="GO:0046872">
    <property type="term" value="F:metal ion binding"/>
    <property type="evidence" value="ECO:0007669"/>
    <property type="project" value="UniProtKB-KW"/>
</dbReference>
<dbReference type="GO" id="GO:0003952">
    <property type="term" value="F:NAD+ synthase (glutamine-hydrolyzing) activity"/>
    <property type="evidence" value="ECO:0007669"/>
    <property type="project" value="InterPro"/>
</dbReference>
<dbReference type="GO" id="GO:0008795">
    <property type="term" value="F:NAD+ synthase activity"/>
    <property type="evidence" value="ECO:0007669"/>
    <property type="project" value="UniProtKB-UniRule"/>
</dbReference>
<dbReference type="GO" id="GO:0009435">
    <property type="term" value="P:NAD biosynthetic process"/>
    <property type="evidence" value="ECO:0007669"/>
    <property type="project" value="UniProtKB-UniRule"/>
</dbReference>
<dbReference type="CDD" id="cd00553">
    <property type="entry name" value="NAD_synthase"/>
    <property type="match status" value="1"/>
</dbReference>
<dbReference type="Gene3D" id="3.40.50.620">
    <property type="entry name" value="HUPs"/>
    <property type="match status" value="1"/>
</dbReference>
<dbReference type="HAMAP" id="MF_00193">
    <property type="entry name" value="NadE_ammonia_dep"/>
    <property type="match status" value="1"/>
</dbReference>
<dbReference type="InterPro" id="IPR022310">
    <property type="entry name" value="NAD/GMP_synthase"/>
</dbReference>
<dbReference type="InterPro" id="IPR003694">
    <property type="entry name" value="NAD_synthase"/>
</dbReference>
<dbReference type="InterPro" id="IPR022926">
    <property type="entry name" value="NH(3)-dep_NAD(+)_synth"/>
</dbReference>
<dbReference type="InterPro" id="IPR014729">
    <property type="entry name" value="Rossmann-like_a/b/a_fold"/>
</dbReference>
<dbReference type="NCBIfam" id="TIGR00552">
    <property type="entry name" value="nadE"/>
    <property type="match status" value="1"/>
</dbReference>
<dbReference type="NCBIfam" id="NF010587">
    <property type="entry name" value="PRK13980.1"/>
    <property type="match status" value="1"/>
</dbReference>
<dbReference type="PANTHER" id="PTHR23090:SF9">
    <property type="entry name" value="GLUTAMINE-DEPENDENT NAD(+) SYNTHETASE"/>
    <property type="match status" value="1"/>
</dbReference>
<dbReference type="PANTHER" id="PTHR23090">
    <property type="entry name" value="NH 3 /GLUTAMINE-DEPENDENT NAD + SYNTHETASE"/>
    <property type="match status" value="1"/>
</dbReference>
<dbReference type="Pfam" id="PF02540">
    <property type="entry name" value="NAD_synthase"/>
    <property type="match status" value="1"/>
</dbReference>
<dbReference type="SUPFAM" id="SSF52402">
    <property type="entry name" value="Adenine nucleotide alpha hydrolases-like"/>
    <property type="match status" value="1"/>
</dbReference>